<organism>
    <name type="scientific">Treponema denticola (strain ATCC 35405 / DSM 14222 / CIP 103919 / JCM 8153 / KCTC 15104)</name>
    <dbReference type="NCBI Taxonomy" id="243275"/>
    <lineage>
        <taxon>Bacteria</taxon>
        <taxon>Pseudomonadati</taxon>
        <taxon>Spirochaetota</taxon>
        <taxon>Spirochaetia</taxon>
        <taxon>Spirochaetales</taxon>
        <taxon>Treponemataceae</taxon>
        <taxon>Treponema</taxon>
    </lineage>
</organism>
<feature type="chain" id="PRO_1000022208" description="Glycine cleavage system H protein">
    <location>
        <begin position="1"/>
        <end position="122"/>
    </location>
</feature>
<feature type="domain" description="Lipoyl-binding" evidence="2">
    <location>
        <begin position="22"/>
        <end position="103"/>
    </location>
</feature>
<feature type="modified residue" description="N6-lipoyllysine" evidence="1">
    <location>
        <position position="63"/>
    </location>
</feature>
<name>GCSH_TREDE</name>
<keyword id="KW-0450">Lipoyl</keyword>
<keyword id="KW-1185">Reference proteome</keyword>
<dbReference type="EMBL" id="AE017226">
    <property type="protein sequence ID" value="AAS12143.1"/>
    <property type="molecule type" value="Genomic_DNA"/>
</dbReference>
<dbReference type="RefSeq" id="NP_972232.1">
    <property type="nucleotide sequence ID" value="NC_002967.9"/>
</dbReference>
<dbReference type="RefSeq" id="WP_002669223.1">
    <property type="nucleotide sequence ID" value="NC_002967.9"/>
</dbReference>
<dbReference type="SMR" id="Q73M83"/>
<dbReference type="STRING" id="243275.TDE_1626"/>
<dbReference type="PaxDb" id="243275-TDE_1626"/>
<dbReference type="GeneID" id="2739735"/>
<dbReference type="KEGG" id="tde:TDE_1626"/>
<dbReference type="PATRIC" id="fig|243275.7.peg.1554"/>
<dbReference type="eggNOG" id="COG0509">
    <property type="taxonomic scope" value="Bacteria"/>
</dbReference>
<dbReference type="HOGENOM" id="CLU_097408_2_2_12"/>
<dbReference type="OrthoDB" id="9796712at2"/>
<dbReference type="Proteomes" id="UP000008212">
    <property type="component" value="Chromosome"/>
</dbReference>
<dbReference type="GO" id="GO:0005829">
    <property type="term" value="C:cytosol"/>
    <property type="evidence" value="ECO:0007669"/>
    <property type="project" value="TreeGrafter"/>
</dbReference>
<dbReference type="GO" id="GO:0005960">
    <property type="term" value="C:glycine cleavage complex"/>
    <property type="evidence" value="ECO:0007669"/>
    <property type="project" value="InterPro"/>
</dbReference>
<dbReference type="GO" id="GO:0019464">
    <property type="term" value="P:glycine decarboxylation via glycine cleavage system"/>
    <property type="evidence" value="ECO:0007669"/>
    <property type="project" value="UniProtKB-UniRule"/>
</dbReference>
<dbReference type="CDD" id="cd06848">
    <property type="entry name" value="GCS_H"/>
    <property type="match status" value="1"/>
</dbReference>
<dbReference type="Gene3D" id="2.40.50.100">
    <property type="match status" value="1"/>
</dbReference>
<dbReference type="HAMAP" id="MF_00272">
    <property type="entry name" value="GcvH"/>
    <property type="match status" value="1"/>
</dbReference>
<dbReference type="InterPro" id="IPR003016">
    <property type="entry name" value="2-oxoA_DH_lipoyl-BS"/>
</dbReference>
<dbReference type="InterPro" id="IPR000089">
    <property type="entry name" value="Biotin_lipoyl"/>
</dbReference>
<dbReference type="InterPro" id="IPR002930">
    <property type="entry name" value="GCV_H"/>
</dbReference>
<dbReference type="InterPro" id="IPR033753">
    <property type="entry name" value="GCV_H/Fam206"/>
</dbReference>
<dbReference type="InterPro" id="IPR017453">
    <property type="entry name" value="GCV_H_sub"/>
</dbReference>
<dbReference type="InterPro" id="IPR011053">
    <property type="entry name" value="Single_hybrid_motif"/>
</dbReference>
<dbReference type="NCBIfam" id="TIGR00527">
    <property type="entry name" value="gcvH"/>
    <property type="match status" value="1"/>
</dbReference>
<dbReference type="NCBIfam" id="NF002270">
    <property type="entry name" value="PRK01202.1"/>
    <property type="match status" value="1"/>
</dbReference>
<dbReference type="PANTHER" id="PTHR11715">
    <property type="entry name" value="GLYCINE CLEAVAGE SYSTEM H PROTEIN"/>
    <property type="match status" value="1"/>
</dbReference>
<dbReference type="PANTHER" id="PTHR11715:SF3">
    <property type="entry name" value="GLYCINE CLEAVAGE SYSTEM H PROTEIN-RELATED"/>
    <property type="match status" value="1"/>
</dbReference>
<dbReference type="Pfam" id="PF01597">
    <property type="entry name" value="GCV_H"/>
    <property type="match status" value="1"/>
</dbReference>
<dbReference type="SUPFAM" id="SSF51230">
    <property type="entry name" value="Single hybrid motif"/>
    <property type="match status" value="1"/>
</dbReference>
<dbReference type="PROSITE" id="PS50968">
    <property type="entry name" value="BIOTINYL_LIPOYL"/>
    <property type="match status" value="1"/>
</dbReference>
<dbReference type="PROSITE" id="PS00189">
    <property type="entry name" value="LIPOYL"/>
    <property type="match status" value="1"/>
</dbReference>
<protein>
    <recommendedName>
        <fullName evidence="1">Glycine cleavage system H protein</fullName>
    </recommendedName>
</protein>
<gene>
    <name evidence="1" type="primary">gcvH</name>
    <name type="ordered locus">TDE_1626</name>
</gene>
<comment type="function">
    <text evidence="1">The glycine cleavage system catalyzes the degradation of glycine. The H protein shuttles the methylamine group of glycine from the P protein to the T protein.</text>
</comment>
<comment type="cofactor">
    <cofactor evidence="1">
        <name>(R)-lipoate</name>
        <dbReference type="ChEBI" id="CHEBI:83088"/>
    </cofactor>
    <text evidence="1">Binds 1 lipoyl cofactor covalently.</text>
</comment>
<comment type="subunit">
    <text evidence="1">The glycine cleavage system is composed of four proteins: P, T, L and H.</text>
</comment>
<comment type="similarity">
    <text evidence="1">Belongs to the GcvH family.</text>
</comment>
<evidence type="ECO:0000255" key="1">
    <source>
        <dbReference type="HAMAP-Rule" id="MF_00272"/>
    </source>
</evidence>
<evidence type="ECO:0000255" key="2">
    <source>
        <dbReference type="PROSITE-ProRule" id="PRU01066"/>
    </source>
</evidence>
<sequence length="122" mass="13585">MEIKEDVKYLESHEWFKKEGNIGIIGISDYAQSEMGDVVFIELPEVGDEVTADKACATVESVKAVFEIISPMTGKVVEINEELLDAPEKINEDAFGSWFFKVELKGESSKLMDAGKYKGLCK</sequence>
<reference key="1">
    <citation type="journal article" date="2004" name="Proc. Natl. Acad. Sci. U.S.A.">
        <title>Comparison of the genome of the oral pathogen Treponema denticola with other spirochete genomes.</title>
        <authorList>
            <person name="Seshadri R."/>
            <person name="Myers G.S.A."/>
            <person name="Tettelin H."/>
            <person name="Eisen J.A."/>
            <person name="Heidelberg J.F."/>
            <person name="Dodson R.J."/>
            <person name="Davidsen T.M."/>
            <person name="DeBoy R.T."/>
            <person name="Fouts D.E."/>
            <person name="Haft D.H."/>
            <person name="Selengut J."/>
            <person name="Ren Q."/>
            <person name="Brinkac L.M."/>
            <person name="Madupu R."/>
            <person name="Kolonay J.F."/>
            <person name="Durkin S.A."/>
            <person name="Daugherty S.C."/>
            <person name="Shetty J."/>
            <person name="Shvartsbeyn A."/>
            <person name="Gebregeorgis E."/>
            <person name="Geer K."/>
            <person name="Tsegaye G."/>
            <person name="Malek J.A."/>
            <person name="Ayodeji B."/>
            <person name="Shatsman S."/>
            <person name="McLeod M.P."/>
            <person name="Smajs D."/>
            <person name="Howell J.K."/>
            <person name="Pal S."/>
            <person name="Amin A."/>
            <person name="Vashisth P."/>
            <person name="McNeill T.Z."/>
            <person name="Xiang Q."/>
            <person name="Sodergren E."/>
            <person name="Baca E."/>
            <person name="Weinstock G.M."/>
            <person name="Norris S.J."/>
            <person name="Fraser C.M."/>
            <person name="Paulsen I.T."/>
        </authorList>
    </citation>
    <scope>NUCLEOTIDE SEQUENCE [LARGE SCALE GENOMIC DNA]</scope>
    <source>
        <strain>ATCC 35405 / DSM 14222 / CIP 103919 / JCM 8153 / KCTC 15104</strain>
    </source>
</reference>
<accession>Q73M83</accession>
<proteinExistence type="inferred from homology"/>